<keyword id="KW-0002">3D-structure</keyword>
<keyword id="KW-0025">Alternative splicing</keyword>
<keyword id="KW-0413">Isomerase</keyword>
<keyword id="KW-0507">mRNA processing</keyword>
<keyword id="KW-0508">mRNA splicing</keyword>
<keyword id="KW-0539">Nucleus</keyword>
<keyword id="KW-0597">Phosphoprotein</keyword>
<keyword id="KW-1267">Proteomics identification</keyword>
<keyword id="KW-1185">Reference proteome</keyword>
<keyword id="KW-0694">RNA-binding</keyword>
<keyword id="KW-0697">Rotamase</keyword>
<keyword id="KW-0747">Spliceosome</keyword>
<accession>Q9UNP9</accession>
<accession>B2R971</accession>
<accession>O43634</accession>
<accession>O43635</accession>
<accession>Q32Q72</accession>
<accession>Q3S611</accession>
<accession>Q5TGA0</accession>
<accession>Q5TGA2</accession>
<accession>Q5TGA3</accession>
<accession>Q9UIZ5</accession>
<organism>
    <name type="scientific">Homo sapiens</name>
    <name type="common">Human</name>
    <dbReference type="NCBI Taxonomy" id="9606"/>
    <lineage>
        <taxon>Eukaryota</taxon>
        <taxon>Metazoa</taxon>
        <taxon>Chordata</taxon>
        <taxon>Craniata</taxon>
        <taxon>Vertebrata</taxon>
        <taxon>Euteleostomi</taxon>
        <taxon>Mammalia</taxon>
        <taxon>Eutheria</taxon>
        <taxon>Euarchontoglires</taxon>
        <taxon>Primates</taxon>
        <taxon>Haplorrhini</taxon>
        <taxon>Catarrhini</taxon>
        <taxon>Hominidae</taxon>
        <taxon>Homo</taxon>
    </lineage>
</organism>
<reference key="1">
    <citation type="journal article" date="1998" name="Oncogene">
        <title>Co-amplification of a novel cyclophilin-like gene (PPIE) with L-myc in small cell lung cancer cell lines.</title>
        <authorList>
            <person name="Kim J.-O."/>
            <person name="Nau M.M."/>
            <person name="Allikian K.A."/>
            <person name="Makela T.P."/>
            <person name="Alitalo K."/>
            <person name="Johnson B.E."/>
            <person name="Kelley M.J."/>
        </authorList>
    </citation>
    <scope>NUCLEOTIDE SEQUENCE [MRNA] (ISOFORMS A AND B)</scope>
</reference>
<reference key="2">
    <citation type="submission" date="1998-01" db="EMBL/GenBank/DDBJ databases">
        <authorList>
            <person name="Slater C."/>
            <person name="Thill G."/>
            <person name="Obar R."/>
        </authorList>
    </citation>
    <scope>NUCLEOTIDE SEQUENCE [MRNA] (ISOFORMS A AND B)</scope>
</reference>
<reference key="3">
    <citation type="submission" date="2005-08" db="EMBL/GenBank/DDBJ databases">
        <authorList>
            <person name="Zhou G."/>
            <person name="Nong W."/>
            <person name="Li H."/>
            <person name="Ke R."/>
            <person name="Shen C."/>
            <person name="Zhong G."/>
            <person name="Zheng Z."/>
            <person name="Liang M."/>
            <person name="Tang Z."/>
            <person name="Huang B."/>
            <person name="Lin L."/>
            <person name="Yang S."/>
        </authorList>
    </citation>
    <scope>NUCLEOTIDE SEQUENCE [MRNA] (ISOFORM 3)</scope>
</reference>
<reference key="4">
    <citation type="journal article" date="2004" name="Nat. Genet.">
        <title>Complete sequencing and characterization of 21,243 full-length human cDNAs.</title>
        <authorList>
            <person name="Ota T."/>
            <person name="Suzuki Y."/>
            <person name="Nishikawa T."/>
            <person name="Otsuki T."/>
            <person name="Sugiyama T."/>
            <person name="Irie R."/>
            <person name="Wakamatsu A."/>
            <person name="Hayashi K."/>
            <person name="Sato H."/>
            <person name="Nagai K."/>
            <person name="Kimura K."/>
            <person name="Makita H."/>
            <person name="Sekine M."/>
            <person name="Obayashi M."/>
            <person name="Nishi T."/>
            <person name="Shibahara T."/>
            <person name="Tanaka T."/>
            <person name="Ishii S."/>
            <person name="Yamamoto J."/>
            <person name="Saito K."/>
            <person name="Kawai Y."/>
            <person name="Isono Y."/>
            <person name="Nakamura Y."/>
            <person name="Nagahari K."/>
            <person name="Murakami K."/>
            <person name="Yasuda T."/>
            <person name="Iwayanagi T."/>
            <person name="Wagatsuma M."/>
            <person name="Shiratori A."/>
            <person name="Sudo H."/>
            <person name="Hosoiri T."/>
            <person name="Kaku Y."/>
            <person name="Kodaira H."/>
            <person name="Kondo H."/>
            <person name="Sugawara M."/>
            <person name="Takahashi M."/>
            <person name="Kanda K."/>
            <person name="Yokoi T."/>
            <person name="Furuya T."/>
            <person name="Kikkawa E."/>
            <person name="Omura Y."/>
            <person name="Abe K."/>
            <person name="Kamihara K."/>
            <person name="Katsuta N."/>
            <person name="Sato K."/>
            <person name="Tanikawa M."/>
            <person name="Yamazaki M."/>
            <person name="Ninomiya K."/>
            <person name="Ishibashi T."/>
            <person name="Yamashita H."/>
            <person name="Murakawa K."/>
            <person name="Fujimori K."/>
            <person name="Tanai H."/>
            <person name="Kimata M."/>
            <person name="Watanabe M."/>
            <person name="Hiraoka S."/>
            <person name="Chiba Y."/>
            <person name="Ishida S."/>
            <person name="Ono Y."/>
            <person name="Takiguchi S."/>
            <person name="Watanabe S."/>
            <person name="Yosida M."/>
            <person name="Hotuta T."/>
            <person name="Kusano J."/>
            <person name="Kanehori K."/>
            <person name="Takahashi-Fujii A."/>
            <person name="Hara H."/>
            <person name="Tanase T.-O."/>
            <person name="Nomura Y."/>
            <person name="Togiya S."/>
            <person name="Komai F."/>
            <person name="Hara R."/>
            <person name="Takeuchi K."/>
            <person name="Arita M."/>
            <person name="Imose N."/>
            <person name="Musashino K."/>
            <person name="Yuuki H."/>
            <person name="Oshima A."/>
            <person name="Sasaki N."/>
            <person name="Aotsuka S."/>
            <person name="Yoshikawa Y."/>
            <person name="Matsunawa H."/>
            <person name="Ichihara T."/>
            <person name="Shiohata N."/>
            <person name="Sano S."/>
            <person name="Moriya S."/>
            <person name="Momiyama H."/>
            <person name="Satoh N."/>
            <person name="Takami S."/>
            <person name="Terashima Y."/>
            <person name="Suzuki O."/>
            <person name="Nakagawa S."/>
            <person name="Senoh A."/>
            <person name="Mizoguchi H."/>
            <person name="Goto Y."/>
            <person name="Shimizu F."/>
            <person name="Wakebe H."/>
            <person name="Hishigaki H."/>
            <person name="Watanabe T."/>
            <person name="Sugiyama A."/>
            <person name="Takemoto M."/>
            <person name="Kawakami B."/>
            <person name="Yamazaki M."/>
            <person name="Watanabe K."/>
            <person name="Kumagai A."/>
            <person name="Itakura S."/>
            <person name="Fukuzumi Y."/>
            <person name="Fujimori Y."/>
            <person name="Komiyama M."/>
            <person name="Tashiro H."/>
            <person name="Tanigami A."/>
            <person name="Fujiwara T."/>
            <person name="Ono T."/>
            <person name="Yamada K."/>
            <person name="Fujii Y."/>
            <person name="Ozaki K."/>
            <person name="Hirao M."/>
            <person name="Ohmori Y."/>
            <person name="Kawabata A."/>
            <person name="Hikiji T."/>
            <person name="Kobatake N."/>
            <person name="Inagaki H."/>
            <person name="Ikema Y."/>
            <person name="Okamoto S."/>
            <person name="Okitani R."/>
            <person name="Kawakami T."/>
            <person name="Noguchi S."/>
            <person name="Itoh T."/>
            <person name="Shigeta K."/>
            <person name="Senba T."/>
            <person name="Matsumura K."/>
            <person name="Nakajima Y."/>
            <person name="Mizuno T."/>
            <person name="Morinaga M."/>
            <person name="Sasaki M."/>
            <person name="Togashi T."/>
            <person name="Oyama M."/>
            <person name="Hata H."/>
            <person name="Watanabe M."/>
            <person name="Komatsu T."/>
            <person name="Mizushima-Sugano J."/>
            <person name="Satoh T."/>
            <person name="Shirai Y."/>
            <person name="Takahashi Y."/>
            <person name="Nakagawa K."/>
            <person name="Okumura K."/>
            <person name="Nagase T."/>
            <person name="Nomura N."/>
            <person name="Kikuchi H."/>
            <person name="Masuho Y."/>
            <person name="Yamashita R."/>
            <person name="Nakai K."/>
            <person name="Yada T."/>
            <person name="Nakamura Y."/>
            <person name="Ohara O."/>
            <person name="Isogai T."/>
            <person name="Sugano S."/>
        </authorList>
    </citation>
    <scope>NUCLEOTIDE SEQUENCE [LARGE SCALE MRNA] (ISOFORM A)</scope>
    <source>
        <tissue>Brain</tissue>
    </source>
</reference>
<reference key="5">
    <citation type="journal article" date="2006" name="Nature">
        <title>The DNA sequence and biological annotation of human chromosome 1.</title>
        <authorList>
            <person name="Gregory S.G."/>
            <person name="Barlow K.F."/>
            <person name="McLay K.E."/>
            <person name="Kaul R."/>
            <person name="Swarbreck D."/>
            <person name="Dunham A."/>
            <person name="Scott C.E."/>
            <person name="Howe K.L."/>
            <person name="Woodfine K."/>
            <person name="Spencer C.C.A."/>
            <person name="Jones M.C."/>
            <person name="Gillson C."/>
            <person name="Searle S."/>
            <person name="Zhou Y."/>
            <person name="Kokocinski F."/>
            <person name="McDonald L."/>
            <person name="Evans R."/>
            <person name="Phillips K."/>
            <person name="Atkinson A."/>
            <person name="Cooper R."/>
            <person name="Jones C."/>
            <person name="Hall R.E."/>
            <person name="Andrews T.D."/>
            <person name="Lloyd C."/>
            <person name="Ainscough R."/>
            <person name="Almeida J.P."/>
            <person name="Ambrose K.D."/>
            <person name="Anderson F."/>
            <person name="Andrew R.W."/>
            <person name="Ashwell R.I.S."/>
            <person name="Aubin K."/>
            <person name="Babbage A.K."/>
            <person name="Bagguley C.L."/>
            <person name="Bailey J."/>
            <person name="Beasley H."/>
            <person name="Bethel G."/>
            <person name="Bird C.P."/>
            <person name="Bray-Allen S."/>
            <person name="Brown J.Y."/>
            <person name="Brown A.J."/>
            <person name="Buckley D."/>
            <person name="Burton J."/>
            <person name="Bye J."/>
            <person name="Carder C."/>
            <person name="Chapman J.C."/>
            <person name="Clark S.Y."/>
            <person name="Clarke G."/>
            <person name="Clee C."/>
            <person name="Cobley V."/>
            <person name="Collier R.E."/>
            <person name="Corby N."/>
            <person name="Coville G.J."/>
            <person name="Davies J."/>
            <person name="Deadman R."/>
            <person name="Dunn M."/>
            <person name="Earthrowl M."/>
            <person name="Ellington A.G."/>
            <person name="Errington H."/>
            <person name="Frankish A."/>
            <person name="Frankland J."/>
            <person name="French L."/>
            <person name="Garner P."/>
            <person name="Garnett J."/>
            <person name="Gay L."/>
            <person name="Ghori M.R.J."/>
            <person name="Gibson R."/>
            <person name="Gilby L.M."/>
            <person name="Gillett W."/>
            <person name="Glithero R.J."/>
            <person name="Grafham D.V."/>
            <person name="Griffiths C."/>
            <person name="Griffiths-Jones S."/>
            <person name="Grocock R."/>
            <person name="Hammond S."/>
            <person name="Harrison E.S.I."/>
            <person name="Hart E."/>
            <person name="Haugen E."/>
            <person name="Heath P.D."/>
            <person name="Holmes S."/>
            <person name="Holt K."/>
            <person name="Howden P.J."/>
            <person name="Hunt A.R."/>
            <person name="Hunt S.E."/>
            <person name="Hunter G."/>
            <person name="Isherwood J."/>
            <person name="James R."/>
            <person name="Johnson C."/>
            <person name="Johnson D."/>
            <person name="Joy A."/>
            <person name="Kay M."/>
            <person name="Kershaw J.K."/>
            <person name="Kibukawa M."/>
            <person name="Kimberley A.M."/>
            <person name="King A."/>
            <person name="Knights A.J."/>
            <person name="Lad H."/>
            <person name="Laird G."/>
            <person name="Lawlor S."/>
            <person name="Leongamornlert D.A."/>
            <person name="Lloyd D.M."/>
            <person name="Loveland J."/>
            <person name="Lovell J."/>
            <person name="Lush M.J."/>
            <person name="Lyne R."/>
            <person name="Martin S."/>
            <person name="Mashreghi-Mohammadi M."/>
            <person name="Matthews L."/>
            <person name="Matthews N.S.W."/>
            <person name="McLaren S."/>
            <person name="Milne S."/>
            <person name="Mistry S."/>
            <person name="Moore M.J.F."/>
            <person name="Nickerson T."/>
            <person name="O'Dell C.N."/>
            <person name="Oliver K."/>
            <person name="Palmeiri A."/>
            <person name="Palmer S.A."/>
            <person name="Parker A."/>
            <person name="Patel D."/>
            <person name="Pearce A.V."/>
            <person name="Peck A.I."/>
            <person name="Pelan S."/>
            <person name="Phelps K."/>
            <person name="Phillimore B.J."/>
            <person name="Plumb R."/>
            <person name="Rajan J."/>
            <person name="Raymond C."/>
            <person name="Rouse G."/>
            <person name="Saenphimmachak C."/>
            <person name="Sehra H.K."/>
            <person name="Sheridan E."/>
            <person name="Shownkeen R."/>
            <person name="Sims S."/>
            <person name="Skuce C.D."/>
            <person name="Smith M."/>
            <person name="Steward C."/>
            <person name="Subramanian S."/>
            <person name="Sycamore N."/>
            <person name="Tracey A."/>
            <person name="Tromans A."/>
            <person name="Van Helmond Z."/>
            <person name="Wall M."/>
            <person name="Wallis J.M."/>
            <person name="White S."/>
            <person name="Whitehead S.L."/>
            <person name="Wilkinson J.E."/>
            <person name="Willey D.L."/>
            <person name="Williams H."/>
            <person name="Wilming L."/>
            <person name="Wray P.W."/>
            <person name="Wu Z."/>
            <person name="Coulson A."/>
            <person name="Vaudin M."/>
            <person name="Sulston J.E."/>
            <person name="Durbin R.M."/>
            <person name="Hubbard T."/>
            <person name="Wooster R."/>
            <person name="Dunham I."/>
            <person name="Carter N.P."/>
            <person name="McVean G."/>
            <person name="Ross M.T."/>
            <person name="Harrow J."/>
            <person name="Olson M.V."/>
            <person name="Beck S."/>
            <person name="Rogers J."/>
            <person name="Bentley D.R."/>
        </authorList>
    </citation>
    <scope>NUCLEOTIDE SEQUENCE [LARGE SCALE GENOMIC DNA]</scope>
</reference>
<reference key="6">
    <citation type="submission" date="2005-09" db="EMBL/GenBank/DDBJ databases">
        <authorList>
            <person name="Mural R.J."/>
            <person name="Istrail S."/>
            <person name="Sutton G.G."/>
            <person name="Florea L."/>
            <person name="Halpern A.L."/>
            <person name="Mobarry C.M."/>
            <person name="Lippert R."/>
            <person name="Walenz B."/>
            <person name="Shatkay H."/>
            <person name="Dew I."/>
            <person name="Miller J.R."/>
            <person name="Flanigan M.J."/>
            <person name="Edwards N.J."/>
            <person name="Bolanos R."/>
            <person name="Fasulo D."/>
            <person name="Halldorsson B.V."/>
            <person name="Hannenhalli S."/>
            <person name="Turner R."/>
            <person name="Yooseph S."/>
            <person name="Lu F."/>
            <person name="Nusskern D.R."/>
            <person name="Shue B.C."/>
            <person name="Zheng X.H."/>
            <person name="Zhong F."/>
            <person name="Delcher A.L."/>
            <person name="Huson D.H."/>
            <person name="Kravitz S.A."/>
            <person name="Mouchard L."/>
            <person name="Reinert K."/>
            <person name="Remington K.A."/>
            <person name="Clark A.G."/>
            <person name="Waterman M.S."/>
            <person name="Eichler E.E."/>
            <person name="Adams M.D."/>
            <person name="Hunkapiller M.W."/>
            <person name="Myers E.W."/>
            <person name="Venter J.C."/>
        </authorList>
    </citation>
    <scope>NUCLEOTIDE SEQUENCE [LARGE SCALE GENOMIC DNA]</scope>
</reference>
<reference key="7">
    <citation type="journal article" date="2004" name="Genome Res.">
        <title>The status, quality, and expansion of the NIH full-length cDNA project: the Mammalian Gene Collection (MGC).</title>
        <authorList>
            <consortium name="The MGC Project Team"/>
        </authorList>
    </citation>
    <scope>NUCLEOTIDE SEQUENCE [LARGE SCALE MRNA] (ISOFORM A)</scope>
    <source>
        <tissue>Bone marrow</tissue>
        <tissue>Colon</tissue>
        <tissue>Lung</tissue>
    </source>
</reference>
<reference key="8">
    <citation type="journal article" date="1996" name="FEBS Lett.">
        <title>A nuclear RNA-binding cyclophilin in human T cells.</title>
        <authorList>
            <person name="Mi H."/>
            <person name="Kops O."/>
            <person name="Zimmermann E."/>
            <person name="Jaeschke A."/>
            <person name="Tropschug M."/>
        </authorList>
    </citation>
    <scope>FUNCTION</scope>
    <scope>CATALYTIC ACTIVITY</scope>
    <scope>RNA-BINDING</scope>
    <scope>SUBCELLULAR LOCATION</scope>
    <scope>ACTIVITY REGULATION</scope>
</reference>
<reference key="9">
    <citation type="journal article" date="2002" name="RNA">
        <title>Purification and characterization of native spliceosomes suitable for three-dimensional structural analysis.</title>
        <authorList>
            <person name="Jurica M.S."/>
            <person name="Licklider L.J."/>
            <person name="Gygi S.P."/>
            <person name="Grigorieff N."/>
            <person name="Moore M.J."/>
        </authorList>
    </citation>
    <scope>IDENTIFICATION BY MASS SPECTROMETRY</scope>
    <scope>IDENTIFICATION IN THE SPLICEOSOMAL C COMPLEX</scope>
    <scope>FUNCTION</scope>
    <scope>SUBCELLULAR LOCATION</scope>
    <scope>SUBUNIT</scope>
</reference>
<reference key="10">
    <citation type="journal article" date="2008" name="FEBS Lett.">
        <title>Human CyP33 binds specifically to mRNA and binding stimulates PPIase activity of hCyP33.</title>
        <authorList>
            <person name="Wang Y."/>
            <person name="Han R."/>
            <person name="Zhang W."/>
            <person name="Yuan Y."/>
            <person name="Zhang X."/>
            <person name="Long Y."/>
            <person name="Mi H."/>
        </authorList>
    </citation>
    <scope>FUNCTION</scope>
    <scope>CATALYTIC ACTIVITY</scope>
    <scope>RNA-BINDING</scope>
    <scope>ACTIVITY REGULATION</scope>
</reference>
<reference key="11">
    <citation type="journal article" date="2008" name="J. Biol. Chem.">
        <title>Isolation of XAB2 complex involved in pre-mRNA splicing, transcription, and transcription-coupled repair.</title>
        <authorList>
            <person name="Kuraoka I."/>
            <person name="Ito S."/>
            <person name="Wada T."/>
            <person name="Hayashida M."/>
            <person name="Lee L."/>
            <person name="Saijo M."/>
            <person name="Nakatsu Y."/>
            <person name="Matsumoto M."/>
            <person name="Matsunaga T."/>
            <person name="Handa H."/>
            <person name="Qin J."/>
            <person name="Nakatani Y."/>
            <person name="Tanaka K."/>
        </authorList>
    </citation>
    <scope>IDENTIFICATION AS PART OF THE XAB2 COMPLEX</scope>
</reference>
<reference key="12">
    <citation type="journal article" date="2011" name="BMC Syst. Biol.">
        <title>Initial characterization of the human central proteome.</title>
        <authorList>
            <person name="Burkard T.R."/>
            <person name="Planyavsky M."/>
            <person name="Kaupe I."/>
            <person name="Breitwieser F.P."/>
            <person name="Buerckstuemmer T."/>
            <person name="Bennett K.L."/>
            <person name="Superti-Furga G."/>
            <person name="Colinge J."/>
        </authorList>
    </citation>
    <scope>IDENTIFICATION BY MASS SPECTROMETRY [LARGE SCALE ANALYSIS]</scope>
</reference>
<reference key="13">
    <citation type="journal article" date="2013" name="J. Proteome Res.">
        <title>Toward a comprehensive characterization of a human cancer cell phosphoproteome.</title>
        <authorList>
            <person name="Zhou H."/>
            <person name="Di Palma S."/>
            <person name="Preisinger C."/>
            <person name="Peng M."/>
            <person name="Polat A.N."/>
            <person name="Heck A.J."/>
            <person name="Mohammed S."/>
        </authorList>
    </citation>
    <scope>PHOSPHORYLATION [LARGE SCALE ANALYSIS] AT SER-91 AND SER-97</scope>
    <scope>IDENTIFICATION BY MASS SPECTROMETRY [LARGE SCALE ANALYSIS]</scope>
    <source>
        <tissue>Cervix carcinoma</tissue>
        <tissue>Erythroleukemia</tissue>
    </source>
</reference>
<reference key="14">
    <citation type="journal article" date="2014" name="J. Proteomics">
        <title>An enzyme assisted RP-RPLC approach for in-depth analysis of human liver phosphoproteome.</title>
        <authorList>
            <person name="Bian Y."/>
            <person name="Song C."/>
            <person name="Cheng K."/>
            <person name="Dong M."/>
            <person name="Wang F."/>
            <person name="Huang J."/>
            <person name="Sun D."/>
            <person name="Wang L."/>
            <person name="Ye M."/>
            <person name="Zou H."/>
        </authorList>
    </citation>
    <scope>PHOSPHORYLATION [LARGE SCALE ANALYSIS] AT SER-119</scope>
    <scope>IDENTIFICATION BY MASS SPECTROMETRY [LARGE SCALE ANALYSIS]</scope>
    <source>
        <tissue>Liver</tissue>
    </source>
</reference>
<reference key="15">
    <citation type="journal article" date="2015" name="Nat. Struct. Mol. Biol.">
        <title>The RNA helicase Aquarius exhibits structural adaptations mediating its recruitment to spliceosomes.</title>
        <authorList>
            <person name="De I."/>
            <person name="Bessonov S."/>
            <person name="Hofele R."/>
            <person name="dos Santos K."/>
            <person name="Will C.L."/>
            <person name="Urlaub H."/>
            <person name="Luhrmann R."/>
            <person name="Pena V."/>
        </authorList>
    </citation>
    <scope>IDENTIFICATION BY MASS SPECTROMETRY</scope>
    <scope>IDENTIFICATION IN THE IB COMPLEX</scope>
    <scope>SUBUNIT</scope>
    <scope>SUBCELLULAR LOCATION</scope>
</reference>
<reference key="16">
    <citation type="submission" date="2005-11" db="PDB data bank">
        <title>Solution structure of the RNA recognition motif in peptidyl-prolyl cis-trans isomerase E.</title>
        <authorList>
            <consortium name="RIKEN structural genomics initiative (RSGI)"/>
        </authorList>
    </citation>
    <scope>STRUCTURE BY NMR OF 1-89</scope>
</reference>
<reference evidence="18" key="17">
    <citation type="journal article" date="2005" name="Biochem. Biophys. Res. Commun.">
        <title>1.88 A crystal structure of the C domain of hCyP33: a novel domain of peptidyl-prolyl cis-trans isomerase.</title>
        <authorList>
            <person name="Wang T."/>
            <person name="Yun C.H."/>
            <person name="Gu S.Y."/>
            <person name="Chang W.R."/>
            <person name="Liang D.C."/>
        </authorList>
    </citation>
    <scope>X-RAY CRYSTALLOGRAPHY (1.88 ANGSTROMS) OF 137-301</scope>
</reference>
<reference evidence="20" key="18">
    <citation type="journal article" date="2010" name="Biochemistry">
        <title>The PHD3 domain of MLL acts as a CYP33-regulated switch between MLL-mediated activation and repression.</title>
        <authorList>
            <person name="Park S."/>
            <person name="Osmers U."/>
            <person name="Raman G."/>
            <person name="Schwantes R.H."/>
            <person name="Diaz M.O."/>
            <person name="Bushweller J.H."/>
        </authorList>
    </citation>
    <scope>STRUCTURE BY NMR OF 3-83</scope>
    <scope>CATALYTIC ACTIVITY</scope>
    <scope>INTERACTION WITH KMT2A AND RNA</scope>
    <scope>FUNCTION</scope>
    <scope>DOMAIN</scope>
    <scope>MUTAGENESIS OF LEU-39; LYS-45; ARG-47; PHE-49; PHE-51; ARG-191 AND PHE-196</scope>
</reference>
<reference evidence="19 21" key="19">
    <citation type="journal article" date="2010" name="Cell">
        <title>Pro isomerization in MLL1 PHD3-bromo cassette connects H3K4me readout to CyP33 and HDAC-mediated repression.</title>
        <authorList>
            <person name="Wang Z."/>
            <person name="Song J."/>
            <person name="Milne T.A."/>
            <person name="Wang G.G."/>
            <person name="Li H."/>
            <person name="Allis C.D."/>
            <person name="Patel D.J."/>
        </authorList>
    </citation>
    <scope>STRUCTURE BY NMR OF 2-82 IN COMPLEX WITH KMT2A</scope>
    <scope>CATALYTIC ACTIVITY</scope>
    <scope>FUNCTION</scope>
    <scope>INTERACTION WITH KMT2A</scope>
    <scope>MUTAGENESIS OF PHE-51 AND 196-PHE-MET-197</scope>
</reference>
<reference evidence="22" key="20">
    <citation type="journal article" date="2010" name="J. Mol. Biol.">
        <title>Molecular mechanism of MLL PHD3 and RNA recognition by the Cyp33 RRM domain.</title>
        <authorList>
            <person name="Hom R.A."/>
            <person name="Chang P.Y."/>
            <person name="Roy S."/>
            <person name="Musselman C.A."/>
            <person name="Glass K.C."/>
            <person name="Selezneva A.I."/>
            <person name="Gozani O."/>
            <person name="Ismagilov R.F."/>
            <person name="Cleary M.L."/>
            <person name="Kutateladze T.G."/>
        </authorList>
    </citation>
    <scope>X-RAY CRYSTALLOGRAPHY (1.85 ANGSTROMS) OF 1-83</scope>
    <scope>FUNCTION</scope>
    <scope>INTERACTION WITH KMT2A AND RNA</scope>
    <scope>DOMAIN</scope>
    <scope>MUTAGENESIS OF TYR-9; LEU-39; 40-ASP--LYS-45; GLU-42; ARG-47; PHE-49 AND PHE-51</scope>
</reference>
<reference evidence="23" key="21">
    <citation type="journal article" date="2017" name="Nature">
        <title>Cryo-EM structure of a human spliceosome activated for step 2 of splicing.</title>
        <authorList>
            <person name="Bertram K."/>
            <person name="Agafonov D.E."/>
            <person name="Liu W.T."/>
            <person name="Dybkov O."/>
            <person name="Will C.L."/>
            <person name="Hartmuth K."/>
            <person name="Urlaub H."/>
            <person name="Kastner B."/>
            <person name="Stark H."/>
            <person name="Luhrmann R."/>
        </authorList>
    </citation>
    <scope>STRUCTURE BY ELECTRON MICROSCOPY (5.90 ANGSTROMS)</scope>
    <scope>FUNCTION</scope>
    <scope>SUBUNIT</scope>
    <scope>SUBCELLULAR LOCATION</scope>
    <scope>IDENTIFICATION BY MASS SPECTROMETRY</scope>
</reference>
<gene>
    <name type="primary">PPIE</name>
    <name evidence="13" type="synonym">CYP33</name>
</gene>
<comment type="function">
    <text evidence="4 6 7 8 9 11 12">Involved in pre-mRNA splicing as component of the spliceosome (PubMed:11991638, PubMed:28076346). Combines RNA-binding and PPIase activities (PubMed:18258190, PubMed:20460131, PubMed:20677832, PubMed:8977107). Binds mRNA and has a preference for single-stranded RNA molecules with poly-A and poly-U stretches, suggesting it binds to the poly(A)-region in the 3'-UTR of mRNA molecules (PubMed:18258190, PubMed:20460131, PubMed:8977107). Catalyzes the cis-trans isomerization of proline imidic peptide bonds in proteins (PubMed:18258190, PubMed:20541251, PubMed:20677832, PubMed:8977107). Inhibits KMT2A activity; this requires proline isomerase activity (PubMed:20460131, PubMed:20541251, PubMed:20677832).</text>
</comment>
<comment type="catalytic activity">
    <reaction evidence="4 6 8 9 11 12">
        <text>[protein]-peptidylproline (omega=180) = [protein]-peptidylproline (omega=0)</text>
        <dbReference type="Rhea" id="RHEA:16237"/>
        <dbReference type="Rhea" id="RHEA-COMP:10747"/>
        <dbReference type="Rhea" id="RHEA-COMP:10748"/>
        <dbReference type="ChEBI" id="CHEBI:83833"/>
        <dbReference type="ChEBI" id="CHEBI:83834"/>
        <dbReference type="EC" id="5.2.1.8"/>
    </reaction>
</comment>
<comment type="activity regulation">
    <text evidence="6 12">Enzyme activity is inhibited by cyclosporin A.</text>
</comment>
<comment type="subunit">
    <text evidence="4 5 7 8 9 10 11">Identified in the spliceosome C complex (PubMed:11991638, PubMed:28076346). Component of the XAB2 complex, a multimeric protein complex composed of XAB2, PRPF19, AQR, ZNF830, ISY1, and PPIE (PubMed:17981804). Identified in a pentameric intron-binding (IB) complex composed of AQR, XAB2, ISY1, ZNF830 and PPIE that is incorporated into the spliceosome as a preassembled complex (PubMed:25599396). The IB complex does not contain PRPF19 (PubMed:25599396). Interacts (via RNA-binding domain) with KMT2A (via the third PHD-type zinc-finger) (PubMed:20460131, PubMed:20541251, PubMed:20677832).</text>
</comment>
<comment type="interaction">
    <interactant intactId="EBI-591818">
        <id>Q9UNP9</id>
    </interactant>
    <interactant intactId="EBI-2512328">
        <id>O60306</id>
        <label>AQR</label>
    </interactant>
    <organismsDiffer>false</organismsDiffer>
    <experiments>11</experiments>
</comment>
<comment type="interaction">
    <interactant intactId="EBI-591818">
        <id>Q9UNP9</id>
    </interactant>
    <interactant intactId="EBI-348399">
        <id>P22607</id>
        <label>FGFR3</label>
    </interactant>
    <organismsDiffer>false</organismsDiffer>
    <experiments>3</experiments>
</comment>
<comment type="interaction">
    <interactant intactId="EBI-591818">
        <id>Q9UNP9</id>
    </interactant>
    <interactant intactId="EBI-351506">
        <id>P06396</id>
        <label>GSN</label>
    </interactant>
    <organismsDiffer>false</organismsDiffer>
    <experiments>3</experiments>
</comment>
<comment type="interaction">
    <interactant intactId="EBI-591818">
        <id>Q9UNP9</id>
    </interactant>
    <interactant intactId="EBI-591370">
        <id>Q03164</id>
        <label>KMT2A</label>
    </interactant>
    <organismsDiffer>false</organismsDiffer>
    <experiments>4</experiments>
</comment>
<comment type="interaction">
    <interactant intactId="EBI-591818">
        <id>Q9UNP9</id>
    </interactant>
    <interactant intactId="EBI-295232">
        <id>Q9HCS7</id>
        <label>XAB2</label>
    </interactant>
    <organismsDiffer>false</organismsDiffer>
    <experiments>14</experiments>
</comment>
<comment type="interaction">
    <interactant intactId="EBI-591818">
        <id>Q9UNP9</id>
    </interactant>
    <interactant intactId="EBI-15814420">
        <id>Q6Q1S2</id>
        <label>S</label>
    </interactant>
    <organismsDiffer>true</organismsDiffer>
    <experiments>2</experiments>
</comment>
<comment type="subcellular location">
    <subcellularLocation>
        <location evidence="4 10 11 12">Nucleus</location>
    </subcellularLocation>
</comment>
<comment type="alternative products">
    <event type="alternative splicing"/>
    <isoform>
        <id>Q9UNP9-1</id>
        <name>A</name>
        <sequence type="displayed"/>
    </isoform>
    <isoform>
        <id>Q9UNP9-2</id>
        <name>B</name>
        <sequence type="described" ref="VSP_005181"/>
    </isoform>
    <isoform>
        <id>Q9UNP9-3</id>
        <name>3</name>
        <name>Cyclophilin-33B</name>
        <sequence type="described" ref="VSP_046370"/>
    </isoform>
</comment>
<comment type="tissue specificity">
    <text>Found in all the examined tissues including heart, brain, placenta, lung, liver, skeletal muscle, kidney and pancreas.</text>
</comment>
<comment type="domain">
    <text evidence="7 9">The RRM domain mediates both interaction with RNA and with KMT2A (via the third PHD-type zinc-finger), but has much higher affinity for the KMT2A PHD-type zinc-finger.</text>
</comment>
<comment type="similarity">
    <text evidence="17">Belongs to the cyclophilin-type PPIase family. PPIase E subfamily.</text>
</comment>
<sequence>MATTKRVLYVGGLAEEVDDKVLHAAFIPFGDITDIQIPLDYETEKHRGFAFVEFELAEDAAAAIDNMNESELFGRTIRVNLAKPMRIKEGSSRPVWSDDDWLKKFSGKTLEENKEEEGSEPPKAETQEGEPIAKKARSNPQVYMDIKIGNKPAGRIQMLLRSDVVPMTAENFRCLCTHEKGFGFKGSSFHRIIPQFMCQGGDFTNHNGTGGKSIYGKKFDDENFILKHTGPGLLSMANSGPNTNGSQFFLTCDKTDWLDGKHVVFGEVTEGLDVLRQIEAQGSKDGKPKQKVIIADCGEYV</sequence>
<dbReference type="EC" id="5.2.1.8" evidence="6 8 9 12"/>
<dbReference type="EMBL" id="AF104012">
    <property type="protein sequence ID" value="AAD19906.1"/>
    <property type="molecule type" value="mRNA"/>
</dbReference>
<dbReference type="EMBL" id="AF104013">
    <property type="protein sequence ID" value="AAD19907.1"/>
    <property type="molecule type" value="mRNA"/>
</dbReference>
<dbReference type="EMBL" id="AF042385">
    <property type="protein sequence ID" value="AAC00006.1"/>
    <property type="molecule type" value="mRNA"/>
</dbReference>
<dbReference type="EMBL" id="AF042386">
    <property type="protein sequence ID" value="AAC00007.1"/>
    <property type="molecule type" value="mRNA"/>
</dbReference>
<dbReference type="EMBL" id="DQ160195">
    <property type="protein sequence ID" value="AAZ93379.1"/>
    <property type="molecule type" value="mRNA"/>
</dbReference>
<dbReference type="EMBL" id="AK313666">
    <property type="protein sequence ID" value="BAG36418.1"/>
    <property type="molecule type" value="mRNA"/>
</dbReference>
<dbReference type="EMBL" id="AL049824">
    <property type="status" value="NOT_ANNOTATED_CDS"/>
    <property type="molecule type" value="Genomic_DNA"/>
</dbReference>
<dbReference type="EMBL" id="AL033527">
    <property type="status" value="NOT_ANNOTATED_CDS"/>
    <property type="molecule type" value="Genomic_DNA"/>
</dbReference>
<dbReference type="EMBL" id="AL035404">
    <property type="status" value="NOT_ANNOTATED_CDS"/>
    <property type="molecule type" value="Genomic_DNA"/>
</dbReference>
<dbReference type="EMBL" id="CH471059">
    <property type="protein sequence ID" value="EAX07255.1"/>
    <property type="molecule type" value="Genomic_DNA"/>
</dbReference>
<dbReference type="EMBL" id="BC004898">
    <property type="protein sequence ID" value="AAH04898.1"/>
    <property type="molecule type" value="mRNA"/>
</dbReference>
<dbReference type="EMBL" id="BC008451">
    <property type="protein sequence ID" value="AAH08451.1"/>
    <property type="molecule type" value="mRNA"/>
</dbReference>
<dbReference type="EMBL" id="BC107736">
    <property type="protein sequence ID" value="AAI07737.1"/>
    <property type="molecule type" value="mRNA"/>
</dbReference>
<dbReference type="CCDS" id="CCDS442.1">
    <molecule id="Q9UNP9-2"/>
</dbReference>
<dbReference type="CCDS" id="CCDS443.1">
    <molecule id="Q9UNP9-1"/>
</dbReference>
<dbReference type="CCDS" id="CCDS53299.1">
    <molecule id="Q9UNP9-3"/>
</dbReference>
<dbReference type="PIR" id="S66681">
    <property type="entry name" value="S66681"/>
</dbReference>
<dbReference type="RefSeq" id="NP_001181936.1">
    <molecule id="Q9UNP9-3"/>
    <property type="nucleotide sequence ID" value="NM_001195007.2"/>
</dbReference>
<dbReference type="RefSeq" id="NP_006103.1">
    <molecule id="Q9UNP9-1"/>
    <property type="nucleotide sequence ID" value="NM_006112.4"/>
</dbReference>
<dbReference type="RefSeq" id="NP_982281.1">
    <molecule id="Q9UNP9-2"/>
    <property type="nucleotide sequence ID" value="NM_203456.3"/>
</dbReference>
<dbReference type="RefSeq" id="XP_016855540.1">
    <molecule id="Q9UNP9-3"/>
    <property type="nucleotide sequence ID" value="XM_017000051.3"/>
</dbReference>
<dbReference type="RefSeq" id="XP_047286017.1">
    <molecule id="Q9UNP9-3"/>
    <property type="nucleotide sequence ID" value="XM_047430061.1"/>
</dbReference>
<dbReference type="RefSeq" id="XP_054189805.1">
    <molecule id="Q9UNP9-3"/>
    <property type="nucleotide sequence ID" value="XM_054333830.1"/>
</dbReference>
<dbReference type="RefSeq" id="XP_054189806.1">
    <molecule id="Q9UNP9-3"/>
    <property type="nucleotide sequence ID" value="XM_054333831.1"/>
</dbReference>
<dbReference type="PDB" id="1ZMF">
    <property type="method" value="X-ray"/>
    <property type="resolution" value="1.88 A"/>
    <property type="chains" value="A=137-301"/>
</dbReference>
<dbReference type="PDB" id="2CQB">
    <property type="method" value="NMR"/>
    <property type="chains" value="A=1-89"/>
</dbReference>
<dbReference type="PDB" id="2KU7">
    <property type="method" value="NMR"/>
    <property type="chains" value="A=2-82"/>
</dbReference>
<dbReference type="PDB" id="2KYX">
    <property type="method" value="NMR"/>
    <property type="chains" value="A=3-83"/>
</dbReference>
<dbReference type="PDB" id="2R99">
    <property type="method" value="X-ray"/>
    <property type="resolution" value="1.61 A"/>
    <property type="chains" value="A=131-301"/>
</dbReference>
<dbReference type="PDB" id="3LPY">
    <property type="method" value="X-ray"/>
    <property type="resolution" value="2.00 A"/>
    <property type="chains" value="A/B=5-82"/>
</dbReference>
<dbReference type="PDB" id="3MDF">
    <property type="method" value="X-ray"/>
    <property type="resolution" value="1.85 A"/>
    <property type="chains" value="A/B=1-83"/>
</dbReference>
<dbReference type="PDB" id="3UCH">
    <property type="method" value="X-ray"/>
    <property type="resolution" value="2.50 A"/>
    <property type="chains" value="A=129-301"/>
</dbReference>
<dbReference type="PDB" id="5MQF">
    <property type="method" value="EM"/>
    <property type="resolution" value="5.90 A"/>
    <property type="chains" value="o=1-301"/>
</dbReference>
<dbReference type="PDB" id="5YZG">
    <property type="method" value="EM"/>
    <property type="resolution" value="4.10 A"/>
    <property type="chains" value="1=1-301"/>
</dbReference>
<dbReference type="PDB" id="5Z56">
    <property type="method" value="EM"/>
    <property type="resolution" value="5.10 A"/>
    <property type="chains" value="y=1-301"/>
</dbReference>
<dbReference type="PDB" id="5Z57">
    <property type="method" value="EM"/>
    <property type="resolution" value="6.50 A"/>
    <property type="chains" value="y=1-301"/>
</dbReference>
<dbReference type="PDB" id="6FF7">
    <property type="method" value="EM"/>
    <property type="resolution" value="4.50 A"/>
    <property type="chains" value="o=1-301"/>
</dbReference>
<dbReference type="PDB" id="6ICZ">
    <property type="method" value="EM"/>
    <property type="resolution" value="3.00 A"/>
    <property type="chains" value="y=1-301"/>
</dbReference>
<dbReference type="PDB" id="6ID0">
    <property type="method" value="EM"/>
    <property type="resolution" value="2.90 A"/>
    <property type="chains" value="y=1-301"/>
</dbReference>
<dbReference type="PDB" id="6ID1">
    <property type="method" value="EM"/>
    <property type="resolution" value="2.86 A"/>
    <property type="chains" value="y=1-301"/>
</dbReference>
<dbReference type="PDB" id="7A5P">
    <property type="method" value="EM"/>
    <property type="resolution" value="5.00 A"/>
    <property type="chains" value="o=1-301"/>
</dbReference>
<dbReference type="PDB" id="7ABI">
    <property type="method" value="EM"/>
    <property type="resolution" value="8.00 A"/>
    <property type="chains" value="o=1-301"/>
</dbReference>
<dbReference type="PDB" id="7W59">
    <property type="method" value="EM"/>
    <property type="resolution" value="3.60 A"/>
    <property type="chains" value="y=1-301"/>
</dbReference>
<dbReference type="PDB" id="7W5A">
    <property type="method" value="EM"/>
    <property type="resolution" value="3.60 A"/>
    <property type="chains" value="y=1-301"/>
</dbReference>
<dbReference type="PDB" id="7W5B">
    <property type="method" value="EM"/>
    <property type="resolution" value="4.30 A"/>
    <property type="chains" value="y=1-301"/>
</dbReference>
<dbReference type="PDB" id="7ZEV">
    <property type="method" value="NMR"/>
    <property type="chains" value="A=1-114"/>
</dbReference>
<dbReference type="PDB" id="7ZEW">
    <property type="method" value="NMR"/>
    <property type="chains" value="A=1-114"/>
</dbReference>
<dbReference type="PDB" id="7ZEX">
    <property type="method" value="NMR"/>
    <property type="chains" value="A=1-90"/>
</dbReference>
<dbReference type="PDB" id="7ZEY">
    <property type="method" value="NMR"/>
    <property type="chains" value="A=1-114"/>
</dbReference>
<dbReference type="PDB" id="7ZEZ">
    <property type="method" value="NMR"/>
    <property type="chains" value="A=1-90"/>
</dbReference>
<dbReference type="PDB" id="8C6J">
    <property type="method" value="EM"/>
    <property type="resolution" value="2.80 A"/>
    <property type="chains" value="CE=1-301"/>
</dbReference>
<dbReference type="PDB" id="8CH6">
    <property type="method" value="EM"/>
    <property type="resolution" value="5.90 A"/>
    <property type="chains" value="w=1-301"/>
</dbReference>
<dbReference type="PDB" id="8I0P">
    <property type="method" value="EM"/>
    <property type="resolution" value="3.40 A"/>
    <property type="chains" value="y=1-301"/>
</dbReference>
<dbReference type="PDB" id="8I0R">
    <property type="method" value="EM"/>
    <property type="resolution" value="3.00 A"/>
    <property type="chains" value="y=1-301"/>
</dbReference>
<dbReference type="PDB" id="8I0S">
    <property type="method" value="EM"/>
    <property type="resolution" value="4.20 A"/>
    <property type="chains" value="y=1-301"/>
</dbReference>
<dbReference type="PDB" id="8I0T">
    <property type="method" value="EM"/>
    <property type="resolution" value="3.00 A"/>
    <property type="chains" value="y=1-301"/>
</dbReference>
<dbReference type="PDB" id="8I0U">
    <property type="method" value="EM"/>
    <property type="resolution" value="3.30 A"/>
    <property type="chains" value="y=1-301"/>
</dbReference>
<dbReference type="PDB" id="8I0V">
    <property type="method" value="EM"/>
    <property type="resolution" value="3.00 A"/>
    <property type="chains" value="y=1-301"/>
</dbReference>
<dbReference type="PDB" id="8I0W">
    <property type="method" value="EM"/>
    <property type="resolution" value="3.40 A"/>
    <property type="chains" value="y=1-301"/>
</dbReference>
<dbReference type="PDB" id="9FMD">
    <property type="method" value="EM"/>
    <property type="resolution" value="3.30 A"/>
    <property type="chains" value="y=1-301"/>
</dbReference>
<dbReference type="PDBsum" id="1ZMF"/>
<dbReference type="PDBsum" id="2CQB"/>
<dbReference type="PDBsum" id="2KU7"/>
<dbReference type="PDBsum" id="2KYX"/>
<dbReference type="PDBsum" id="2R99"/>
<dbReference type="PDBsum" id="3LPY"/>
<dbReference type="PDBsum" id="3MDF"/>
<dbReference type="PDBsum" id="3UCH"/>
<dbReference type="PDBsum" id="5MQF"/>
<dbReference type="PDBsum" id="5YZG"/>
<dbReference type="PDBsum" id="5Z56"/>
<dbReference type="PDBsum" id="5Z57"/>
<dbReference type="PDBsum" id="6FF7"/>
<dbReference type="PDBsum" id="6ICZ"/>
<dbReference type="PDBsum" id="6ID0"/>
<dbReference type="PDBsum" id="6ID1"/>
<dbReference type="PDBsum" id="7A5P"/>
<dbReference type="PDBsum" id="7ABI"/>
<dbReference type="PDBsum" id="7W59"/>
<dbReference type="PDBsum" id="7W5A"/>
<dbReference type="PDBsum" id="7W5B"/>
<dbReference type="PDBsum" id="7ZEV"/>
<dbReference type="PDBsum" id="7ZEW"/>
<dbReference type="PDBsum" id="7ZEX"/>
<dbReference type="PDBsum" id="7ZEY"/>
<dbReference type="PDBsum" id="7ZEZ"/>
<dbReference type="PDBsum" id="8C6J"/>
<dbReference type="PDBsum" id="8CH6"/>
<dbReference type="PDBsum" id="8I0P"/>
<dbReference type="PDBsum" id="8I0R"/>
<dbReference type="PDBsum" id="8I0S"/>
<dbReference type="PDBsum" id="8I0T"/>
<dbReference type="PDBsum" id="8I0U"/>
<dbReference type="PDBsum" id="8I0V"/>
<dbReference type="PDBsum" id="8I0W"/>
<dbReference type="PDBsum" id="9FMD"/>
<dbReference type="BMRB" id="Q9UNP9"/>
<dbReference type="EMDB" id="EMD-11697"/>
<dbReference type="EMDB" id="EMD-16452"/>
<dbReference type="EMDB" id="EMD-16658"/>
<dbReference type="EMDB" id="EMD-32317"/>
<dbReference type="EMDB" id="EMD-32319"/>
<dbReference type="EMDB" id="EMD-32321"/>
<dbReference type="EMDB" id="EMD-35105"/>
<dbReference type="EMDB" id="EMD-35107"/>
<dbReference type="EMDB" id="EMD-35108"/>
<dbReference type="EMDB" id="EMD-35109"/>
<dbReference type="EMDB" id="EMD-35110"/>
<dbReference type="EMDB" id="EMD-35111"/>
<dbReference type="EMDB" id="EMD-35113"/>
<dbReference type="EMDB" id="EMD-3545"/>
<dbReference type="EMDB" id="EMD-6864"/>
<dbReference type="EMDB" id="EMD-6889"/>
<dbReference type="EMDB" id="EMD-6890"/>
<dbReference type="EMDB" id="EMD-9645"/>
<dbReference type="EMDB" id="EMD-9646"/>
<dbReference type="EMDB" id="EMD-9647"/>
<dbReference type="SMR" id="Q9UNP9"/>
<dbReference type="BioGRID" id="115714">
    <property type="interactions" value="286"/>
</dbReference>
<dbReference type="ComplexPortal" id="CPX-8065">
    <property type="entry name" value="Intron-binding complex"/>
</dbReference>
<dbReference type="CORUM" id="Q9UNP9"/>
<dbReference type="DIP" id="DIP-34757N"/>
<dbReference type="FunCoup" id="Q9UNP9">
    <property type="interactions" value="2869"/>
</dbReference>
<dbReference type="IntAct" id="Q9UNP9">
    <property type="interactions" value="128"/>
</dbReference>
<dbReference type="MINT" id="Q9UNP9"/>
<dbReference type="STRING" id="9606.ENSP00000361918"/>
<dbReference type="GlyCosmos" id="Q9UNP9">
    <property type="glycosylation" value="2 sites, 1 glycan"/>
</dbReference>
<dbReference type="GlyGen" id="Q9UNP9">
    <property type="glycosylation" value="4 sites, 1 N-linked glycan (1 site), 1 O-linked glycan (3 sites)"/>
</dbReference>
<dbReference type="iPTMnet" id="Q9UNP9"/>
<dbReference type="MetOSite" id="Q9UNP9"/>
<dbReference type="PhosphoSitePlus" id="Q9UNP9"/>
<dbReference type="SwissPalm" id="Q9UNP9"/>
<dbReference type="BioMuta" id="PPIE"/>
<dbReference type="DMDM" id="13124097"/>
<dbReference type="jPOST" id="Q9UNP9"/>
<dbReference type="MassIVE" id="Q9UNP9"/>
<dbReference type="PaxDb" id="9606-ENSP00000361918"/>
<dbReference type="PeptideAtlas" id="Q9UNP9"/>
<dbReference type="ProteomicsDB" id="65110"/>
<dbReference type="ProteomicsDB" id="85321">
    <molecule id="Q9UNP9-1"/>
</dbReference>
<dbReference type="ProteomicsDB" id="85322">
    <molecule id="Q9UNP9-2"/>
</dbReference>
<dbReference type="Pumba" id="Q9UNP9"/>
<dbReference type="TopDownProteomics" id="Q9UNP9-1">
    <molecule id="Q9UNP9-1"/>
</dbReference>
<dbReference type="TopDownProteomics" id="Q9UNP9-2">
    <molecule id="Q9UNP9-2"/>
</dbReference>
<dbReference type="Antibodypedia" id="17854">
    <property type="antibodies" value="272 antibodies from 30 providers"/>
</dbReference>
<dbReference type="DNASU" id="10450"/>
<dbReference type="Ensembl" id="ENST00000324379.10">
    <molecule id="Q9UNP9-1"/>
    <property type="protein sequence ID" value="ENSP00000312769.5"/>
    <property type="gene ID" value="ENSG00000084072.17"/>
</dbReference>
<dbReference type="Ensembl" id="ENST00000356511.6">
    <molecule id="Q9UNP9-2"/>
    <property type="protein sequence ID" value="ENSP00000348904.2"/>
    <property type="gene ID" value="ENSG00000084072.17"/>
</dbReference>
<dbReference type="Ensembl" id="ENST00000372830.5">
    <molecule id="Q9UNP9-3"/>
    <property type="protein sequence ID" value="ENSP00000361918.1"/>
    <property type="gene ID" value="ENSG00000084072.17"/>
</dbReference>
<dbReference type="GeneID" id="10450"/>
<dbReference type="KEGG" id="hsa:10450"/>
<dbReference type="MANE-Select" id="ENST00000324379.10">
    <property type="protein sequence ID" value="ENSP00000312769.5"/>
    <property type="RefSeq nucleotide sequence ID" value="NM_006112.4"/>
    <property type="RefSeq protein sequence ID" value="NP_006103.1"/>
</dbReference>
<dbReference type="UCSC" id="uc001cds.3">
    <molecule id="Q9UNP9-1"/>
    <property type="organism name" value="human"/>
</dbReference>
<dbReference type="AGR" id="HGNC:9258"/>
<dbReference type="CTD" id="10450"/>
<dbReference type="DisGeNET" id="10450"/>
<dbReference type="GeneCards" id="PPIE"/>
<dbReference type="HGNC" id="HGNC:9258">
    <property type="gene designation" value="PPIE"/>
</dbReference>
<dbReference type="HPA" id="ENSG00000084072">
    <property type="expression patterns" value="Low tissue specificity"/>
</dbReference>
<dbReference type="MIM" id="602435">
    <property type="type" value="gene"/>
</dbReference>
<dbReference type="neXtProt" id="NX_Q9UNP9"/>
<dbReference type="OpenTargets" id="ENSG00000084072"/>
<dbReference type="PharmGKB" id="PA33583"/>
<dbReference type="VEuPathDB" id="HostDB:ENSG00000084072"/>
<dbReference type="eggNOG" id="KOG0111">
    <property type="taxonomic scope" value="Eukaryota"/>
</dbReference>
<dbReference type="GeneTree" id="ENSGT00940000158790"/>
<dbReference type="HOGENOM" id="CLU_012062_27_0_1"/>
<dbReference type="InParanoid" id="Q9UNP9"/>
<dbReference type="OMA" id="KIVIYAC"/>
<dbReference type="OrthoDB" id="193499at2759"/>
<dbReference type="PAN-GO" id="Q9UNP9">
    <property type="GO annotations" value="5 GO annotations based on evolutionary models"/>
</dbReference>
<dbReference type="PhylomeDB" id="Q9UNP9"/>
<dbReference type="TreeFam" id="TF313817"/>
<dbReference type="BRENDA" id="5.2.1.8">
    <property type="organism ID" value="2681"/>
</dbReference>
<dbReference type="PathwayCommons" id="Q9UNP9"/>
<dbReference type="Reactome" id="R-HSA-6781823">
    <property type="pathway name" value="Formation of TC-NER Pre-Incision Complex"/>
</dbReference>
<dbReference type="Reactome" id="R-HSA-6781827">
    <property type="pathway name" value="Transcription-Coupled Nucleotide Excision Repair (TC-NER)"/>
</dbReference>
<dbReference type="Reactome" id="R-HSA-6782135">
    <property type="pathway name" value="Dual incision in TC-NER"/>
</dbReference>
<dbReference type="Reactome" id="R-HSA-6782210">
    <property type="pathway name" value="Gap-filling DNA repair synthesis and ligation in TC-NER"/>
</dbReference>
<dbReference type="Reactome" id="R-HSA-6798695">
    <property type="pathway name" value="Neutrophil degranulation"/>
</dbReference>
<dbReference type="Reactome" id="R-HSA-72163">
    <property type="pathway name" value="mRNA Splicing - Major Pathway"/>
</dbReference>
<dbReference type="SignaLink" id="Q9UNP9"/>
<dbReference type="BioGRID-ORCS" id="10450">
    <property type="hits" value="515 hits in 1160 CRISPR screens"/>
</dbReference>
<dbReference type="ChiTaRS" id="PPIE">
    <property type="organism name" value="human"/>
</dbReference>
<dbReference type="EvolutionaryTrace" id="Q9UNP9"/>
<dbReference type="GeneWiki" id="PPIE_(gene)"/>
<dbReference type="GenomeRNAi" id="10450"/>
<dbReference type="Pharos" id="Q9UNP9">
    <property type="development level" value="Tbio"/>
</dbReference>
<dbReference type="PRO" id="PR:Q9UNP9"/>
<dbReference type="Proteomes" id="UP000005640">
    <property type="component" value="Chromosome 1"/>
</dbReference>
<dbReference type="RNAct" id="Q9UNP9">
    <property type="molecule type" value="protein"/>
</dbReference>
<dbReference type="Bgee" id="ENSG00000084072">
    <property type="expression patterns" value="Expressed in left testis and 206 other cell types or tissues"/>
</dbReference>
<dbReference type="ExpressionAtlas" id="Q9UNP9">
    <property type="expression patterns" value="baseline and differential"/>
</dbReference>
<dbReference type="GO" id="GO:0071013">
    <property type="term" value="C:catalytic step 2 spliceosome"/>
    <property type="evidence" value="ECO:0000314"/>
    <property type="project" value="UniProtKB"/>
</dbReference>
<dbReference type="GO" id="GO:0005737">
    <property type="term" value="C:cytoplasm"/>
    <property type="evidence" value="ECO:0000318"/>
    <property type="project" value="GO_Central"/>
</dbReference>
<dbReference type="GO" id="GO:0005829">
    <property type="term" value="C:cytosol"/>
    <property type="evidence" value="ECO:0000314"/>
    <property type="project" value="HPA"/>
</dbReference>
<dbReference type="GO" id="GO:0005576">
    <property type="term" value="C:extracellular region"/>
    <property type="evidence" value="ECO:0000304"/>
    <property type="project" value="Reactome"/>
</dbReference>
<dbReference type="GO" id="GO:1904813">
    <property type="term" value="C:ficolin-1-rich granule lumen"/>
    <property type="evidence" value="ECO:0000304"/>
    <property type="project" value="Reactome"/>
</dbReference>
<dbReference type="GO" id="GO:0043231">
    <property type="term" value="C:intracellular membrane-bounded organelle"/>
    <property type="evidence" value="ECO:0000318"/>
    <property type="project" value="GO_Central"/>
</dbReference>
<dbReference type="GO" id="GO:0016607">
    <property type="term" value="C:nuclear speck"/>
    <property type="evidence" value="ECO:0000314"/>
    <property type="project" value="HPA"/>
</dbReference>
<dbReference type="GO" id="GO:0005654">
    <property type="term" value="C:nucleoplasm"/>
    <property type="evidence" value="ECO:0000304"/>
    <property type="project" value="Reactome"/>
</dbReference>
<dbReference type="GO" id="GO:0005634">
    <property type="term" value="C:nucleus"/>
    <property type="evidence" value="ECO:0000314"/>
    <property type="project" value="UniProtKB"/>
</dbReference>
<dbReference type="GO" id="GO:0034774">
    <property type="term" value="C:secretory granule lumen"/>
    <property type="evidence" value="ECO:0000304"/>
    <property type="project" value="Reactome"/>
</dbReference>
<dbReference type="GO" id="GO:0071007">
    <property type="term" value="C:U2-type catalytic step 2 spliceosome"/>
    <property type="evidence" value="ECO:0000314"/>
    <property type="project" value="UniProtKB"/>
</dbReference>
<dbReference type="GO" id="GO:0016018">
    <property type="term" value="F:cyclosporin A binding"/>
    <property type="evidence" value="ECO:0000318"/>
    <property type="project" value="GO_Central"/>
</dbReference>
<dbReference type="GO" id="GO:0003729">
    <property type="term" value="F:mRNA binding"/>
    <property type="evidence" value="ECO:0000314"/>
    <property type="project" value="UniProtKB"/>
</dbReference>
<dbReference type="GO" id="GO:0003755">
    <property type="term" value="F:peptidyl-prolyl cis-trans isomerase activity"/>
    <property type="evidence" value="ECO:0000314"/>
    <property type="project" value="UniProtKB"/>
</dbReference>
<dbReference type="GO" id="GO:0008143">
    <property type="term" value="F:poly(A) binding"/>
    <property type="evidence" value="ECO:0000314"/>
    <property type="project" value="UniProtKB"/>
</dbReference>
<dbReference type="GO" id="GO:0003723">
    <property type="term" value="F:RNA binding"/>
    <property type="evidence" value="ECO:0007005"/>
    <property type="project" value="UniProtKB"/>
</dbReference>
<dbReference type="GO" id="GO:0000398">
    <property type="term" value="P:mRNA splicing, via spliceosome"/>
    <property type="evidence" value="ECO:0000314"/>
    <property type="project" value="UniProtKB"/>
</dbReference>
<dbReference type="GO" id="GO:0045070">
    <property type="term" value="P:positive regulation of viral genome replication"/>
    <property type="evidence" value="ECO:0000315"/>
    <property type="project" value="UniProtKB"/>
</dbReference>
<dbReference type="GO" id="GO:0006457">
    <property type="term" value="P:protein folding"/>
    <property type="evidence" value="ECO:0000318"/>
    <property type="project" value="GO_Central"/>
</dbReference>
<dbReference type="GO" id="GO:0006355">
    <property type="term" value="P:regulation of DNA-templated transcription"/>
    <property type="evidence" value="ECO:0000315"/>
    <property type="project" value="UniProtKB"/>
</dbReference>
<dbReference type="CDD" id="cd01926">
    <property type="entry name" value="cyclophilin_ABH_like"/>
    <property type="match status" value="1"/>
</dbReference>
<dbReference type="CDD" id="cd12347">
    <property type="entry name" value="RRM_PPIE"/>
    <property type="match status" value="1"/>
</dbReference>
<dbReference type="FunFam" id="2.40.100.10:FF:000010">
    <property type="entry name" value="Peptidyl-prolyl cis-trans isomerase E"/>
    <property type="match status" value="1"/>
</dbReference>
<dbReference type="FunFam" id="3.30.70.330:FF:000348">
    <property type="entry name" value="Peptidyl-prolyl cis-trans isomerase E"/>
    <property type="match status" value="1"/>
</dbReference>
<dbReference type="Gene3D" id="3.30.70.330">
    <property type="match status" value="1"/>
</dbReference>
<dbReference type="Gene3D" id="2.40.100.10">
    <property type="entry name" value="Cyclophilin-like"/>
    <property type="match status" value="1"/>
</dbReference>
<dbReference type="InterPro" id="IPR029000">
    <property type="entry name" value="Cyclophilin-like_dom_sf"/>
</dbReference>
<dbReference type="InterPro" id="IPR020892">
    <property type="entry name" value="Cyclophilin-type_PPIase_CS"/>
</dbReference>
<dbReference type="InterPro" id="IPR002130">
    <property type="entry name" value="Cyclophilin-type_PPIase_dom"/>
</dbReference>
<dbReference type="InterPro" id="IPR012677">
    <property type="entry name" value="Nucleotide-bd_a/b_plait_sf"/>
</dbReference>
<dbReference type="InterPro" id="IPR016304">
    <property type="entry name" value="PPIE"/>
</dbReference>
<dbReference type="InterPro" id="IPR034168">
    <property type="entry name" value="PPIE_RRM"/>
</dbReference>
<dbReference type="InterPro" id="IPR035979">
    <property type="entry name" value="RBD_domain_sf"/>
</dbReference>
<dbReference type="InterPro" id="IPR000504">
    <property type="entry name" value="RRM_dom"/>
</dbReference>
<dbReference type="PANTHER" id="PTHR11071">
    <property type="entry name" value="PEPTIDYL-PROLYL CIS-TRANS ISOMERASE"/>
    <property type="match status" value="1"/>
</dbReference>
<dbReference type="PANTHER" id="PTHR11071:SF561">
    <property type="entry name" value="PEPTIDYL-PROLYL CIS-TRANS ISOMERASE D-RELATED"/>
    <property type="match status" value="1"/>
</dbReference>
<dbReference type="Pfam" id="PF00160">
    <property type="entry name" value="Pro_isomerase"/>
    <property type="match status" value="1"/>
</dbReference>
<dbReference type="Pfam" id="PF00076">
    <property type="entry name" value="RRM_1"/>
    <property type="match status" value="1"/>
</dbReference>
<dbReference type="PIRSF" id="PIRSF001475">
    <property type="entry name" value="PPI_cyclophilin_E"/>
    <property type="match status" value="1"/>
</dbReference>
<dbReference type="PRINTS" id="PR00153">
    <property type="entry name" value="CSAPPISMRASE"/>
</dbReference>
<dbReference type="SMART" id="SM00360">
    <property type="entry name" value="RRM"/>
    <property type="match status" value="1"/>
</dbReference>
<dbReference type="SUPFAM" id="SSF50891">
    <property type="entry name" value="Cyclophilin-like"/>
    <property type="match status" value="1"/>
</dbReference>
<dbReference type="SUPFAM" id="SSF54928">
    <property type="entry name" value="RNA-binding domain, RBD"/>
    <property type="match status" value="1"/>
</dbReference>
<dbReference type="PROSITE" id="PS00170">
    <property type="entry name" value="CSA_PPIASE_1"/>
    <property type="match status" value="1"/>
</dbReference>
<dbReference type="PROSITE" id="PS50072">
    <property type="entry name" value="CSA_PPIASE_2"/>
    <property type="match status" value="1"/>
</dbReference>
<dbReference type="PROSITE" id="PS50102">
    <property type="entry name" value="RRM"/>
    <property type="match status" value="1"/>
</dbReference>
<proteinExistence type="evidence at protein level"/>
<name>PPIE_HUMAN</name>
<feature type="chain" id="PRO_0000064157" description="Peptidyl-prolyl cis-trans isomerase E">
    <location>
        <begin position="1"/>
        <end position="301"/>
    </location>
</feature>
<feature type="domain" description="RRM" evidence="2">
    <location>
        <begin position="6"/>
        <end position="84"/>
    </location>
</feature>
<feature type="domain" description="PPIase cyclophilin-type" evidence="1">
    <location>
        <begin position="143"/>
        <end position="299"/>
    </location>
</feature>
<feature type="region of interest" description="Disordered" evidence="3">
    <location>
        <begin position="107"/>
        <end position="137"/>
    </location>
</feature>
<feature type="modified residue" description="Phosphoserine" evidence="24">
    <location>
        <position position="91"/>
    </location>
</feature>
<feature type="modified residue" description="Phosphoserine" evidence="24">
    <location>
        <position position="97"/>
    </location>
</feature>
<feature type="modified residue" description="Phosphoserine" evidence="25">
    <location>
        <position position="119"/>
    </location>
</feature>
<feature type="splice variant" id="VSP_046370" description="In isoform 3." evidence="16">
    <original>AQGSKDGKPKQKVIIADCGEYV</original>
    <variation>VAPDTKASKARGSRKNKDGQERNWGKSQKVESHTI</variation>
    <location>
        <begin position="280"/>
        <end position="301"/>
    </location>
</feature>
<feature type="splice variant" id="VSP_005181" description="In isoform B." evidence="14 15">
    <original>AQGSKDGKPKQKVIIADCGEYV</original>
    <variation>KQEESAITSQPRSWKLT</variation>
    <location>
        <begin position="280"/>
        <end position="301"/>
    </location>
</feature>
<feature type="mutagenesis site" description="Decreased affinity for RNA." evidence="7">
    <original>Y</original>
    <variation>A</variation>
    <location>
        <position position="9"/>
    </location>
</feature>
<feature type="mutagenesis site" description="Decreased affinity for KMT2A." evidence="7 9">
    <original>L</original>
    <variation>A</variation>
    <location>
        <position position="39"/>
    </location>
</feature>
<feature type="mutagenesis site" description="Abolishes interaction with KMT2A." evidence="7">
    <location>
        <begin position="40"/>
        <end position="45"/>
    </location>
</feature>
<feature type="mutagenesis site" description="Slightly decreased affinity for KMT2A." evidence="7">
    <original>E</original>
    <variation>A</variation>
    <location>
        <position position="42"/>
    </location>
</feature>
<feature type="mutagenesis site" description="No effect on interaction with KMT2A." evidence="9">
    <original>K</original>
    <variation>A</variation>
    <location>
        <position position="45"/>
    </location>
</feature>
<feature type="mutagenesis site" description="No effect on interaction with KMT2A." evidence="7 9">
    <original>R</original>
    <variation>A</variation>
    <location>
        <position position="47"/>
    </location>
</feature>
<feature type="mutagenesis site" description="Strongly decreased affinity for KMT2A. Decreased affinity for RNA." evidence="7 9">
    <original>F</original>
    <variation>A</variation>
    <location>
        <position position="49"/>
    </location>
</feature>
<feature type="mutagenesis site" description="Impairs protein folding." evidence="7 9">
    <original>F</original>
    <variation>A</variation>
    <location>
        <position position="51"/>
    </location>
</feature>
<feature type="mutagenesis site" description="Abolishes interaction with KMT2A. Abolishes inhibition of KMT2A activity." evidence="8">
    <original>F</original>
    <variation>D</variation>
    <location>
        <position position="51"/>
    </location>
</feature>
<feature type="mutagenesis site" description="Expected to disrupt proline isomerase activity. Abolishes inhibition of KMT2A activity; when associated with A-196." evidence="9">
    <original>R</original>
    <variation>A</variation>
    <location>
        <position position="191"/>
    </location>
</feature>
<feature type="mutagenesis site" description="Expected to disrupt peptidylproline binding. Decreases interaction with KMT2A. Abolishes inhibition of KMT2A activity." evidence="8">
    <original>FM</original>
    <variation>EE</variation>
    <location>
        <begin position="196"/>
        <end position="197"/>
    </location>
</feature>
<feature type="mutagenesis site" description="Expected to disrupt proline isomerase activity. Abolishes inhibition of KMT2A activity; when associated with A-191." evidence="9">
    <original>F</original>
    <variation>A</variation>
    <location>
        <position position="196"/>
    </location>
</feature>
<feature type="sequence conflict" description="In Ref. 3; AAZ93379." evidence="17" ref="3">
    <original>K</original>
    <variation>R</variation>
    <location>
        <position position="151"/>
    </location>
</feature>
<feature type="sequence conflict" description="In Ref. 3; AAZ93379." evidence="17" ref="3">
    <original>N</original>
    <variation>D</variation>
    <location>
        <position position="207"/>
    </location>
</feature>
<feature type="sequence conflict" description="In Ref. 2; AAC00006." evidence="17" ref="2">
    <original>K</original>
    <variation>N</variation>
    <location>
        <position position="287"/>
    </location>
</feature>
<feature type="strand" evidence="30">
    <location>
        <begin position="1"/>
        <end position="3"/>
    </location>
</feature>
<feature type="strand" evidence="27">
    <location>
        <begin position="5"/>
        <end position="11"/>
    </location>
</feature>
<feature type="helix" evidence="27">
    <location>
        <begin position="19"/>
        <end position="26"/>
    </location>
</feature>
<feature type="helix" evidence="27">
    <location>
        <begin position="27"/>
        <end position="29"/>
    </location>
</feature>
<feature type="strand" evidence="27">
    <location>
        <begin position="32"/>
        <end position="36"/>
    </location>
</feature>
<feature type="turn" evidence="27">
    <location>
        <begin position="41"/>
        <end position="43"/>
    </location>
</feature>
<feature type="strand" evidence="27">
    <location>
        <begin position="48"/>
        <end position="56"/>
    </location>
</feature>
<feature type="helix" evidence="27">
    <location>
        <begin position="57"/>
        <end position="67"/>
    </location>
</feature>
<feature type="turn" evidence="29">
    <location>
        <begin position="71"/>
        <end position="74"/>
    </location>
</feature>
<feature type="strand" evidence="27">
    <location>
        <begin position="78"/>
        <end position="81"/>
    </location>
</feature>
<feature type="turn" evidence="33">
    <location>
        <begin position="82"/>
        <end position="84"/>
    </location>
</feature>
<feature type="turn" evidence="32">
    <location>
        <begin position="89"/>
        <end position="91"/>
    </location>
</feature>
<feature type="strand" evidence="30">
    <location>
        <begin position="95"/>
        <end position="97"/>
    </location>
</feature>
<feature type="helix" evidence="30">
    <location>
        <begin position="98"/>
        <end position="107"/>
    </location>
</feature>
<feature type="helix" evidence="31">
    <location>
        <begin position="109"/>
        <end position="112"/>
    </location>
</feature>
<feature type="strand" evidence="26">
    <location>
        <begin position="141"/>
        <end position="148"/>
    </location>
</feature>
<feature type="strand" evidence="26">
    <location>
        <begin position="151"/>
        <end position="160"/>
    </location>
</feature>
<feature type="turn" evidence="26">
    <location>
        <begin position="162"/>
        <end position="164"/>
    </location>
</feature>
<feature type="helix" evidence="26">
    <location>
        <begin position="166"/>
        <end position="177"/>
    </location>
</feature>
<feature type="turn" evidence="26">
    <location>
        <begin position="178"/>
        <end position="180"/>
    </location>
</feature>
<feature type="strand" evidence="26">
    <location>
        <begin position="188"/>
        <end position="193"/>
    </location>
</feature>
<feature type="turn" evidence="26">
    <location>
        <begin position="194"/>
        <end position="196"/>
    </location>
</feature>
<feature type="strand" evidence="26">
    <location>
        <begin position="197"/>
        <end position="200"/>
    </location>
</feature>
<feature type="turn" evidence="26">
    <location>
        <begin position="203"/>
        <end position="205"/>
    </location>
</feature>
<feature type="strand" evidence="26">
    <location>
        <begin position="206"/>
        <end position="209"/>
    </location>
</feature>
<feature type="strand" evidence="28">
    <location>
        <begin position="214"/>
        <end position="217"/>
    </location>
</feature>
<feature type="strand" evidence="26">
    <location>
        <begin position="230"/>
        <end position="236"/>
    </location>
</feature>
<feature type="strand" evidence="26">
    <location>
        <begin position="248"/>
        <end position="253"/>
    </location>
</feature>
<feature type="helix" evidence="26">
    <location>
        <begin position="256"/>
        <end position="258"/>
    </location>
</feature>
<feature type="turn" evidence="26">
    <location>
        <begin position="259"/>
        <end position="261"/>
    </location>
</feature>
<feature type="strand" evidence="26">
    <location>
        <begin position="264"/>
        <end position="270"/>
    </location>
</feature>
<feature type="helix" evidence="26">
    <location>
        <begin position="272"/>
        <end position="279"/>
    </location>
</feature>
<feature type="strand" evidence="26">
    <location>
        <begin position="292"/>
        <end position="299"/>
    </location>
</feature>
<evidence type="ECO:0000255" key="1">
    <source>
        <dbReference type="PROSITE-ProRule" id="PRU00156"/>
    </source>
</evidence>
<evidence type="ECO:0000255" key="2">
    <source>
        <dbReference type="PROSITE-ProRule" id="PRU00176"/>
    </source>
</evidence>
<evidence type="ECO:0000256" key="3">
    <source>
        <dbReference type="SAM" id="MobiDB-lite"/>
    </source>
</evidence>
<evidence type="ECO:0000269" key="4">
    <source>
    </source>
</evidence>
<evidence type="ECO:0000269" key="5">
    <source>
    </source>
</evidence>
<evidence type="ECO:0000269" key="6">
    <source>
    </source>
</evidence>
<evidence type="ECO:0000269" key="7">
    <source>
    </source>
</evidence>
<evidence type="ECO:0000269" key="8">
    <source>
    </source>
</evidence>
<evidence type="ECO:0000269" key="9">
    <source>
    </source>
</evidence>
<evidence type="ECO:0000269" key="10">
    <source>
    </source>
</evidence>
<evidence type="ECO:0000269" key="11">
    <source>
    </source>
</evidence>
<evidence type="ECO:0000269" key="12">
    <source>
    </source>
</evidence>
<evidence type="ECO:0000303" key="13">
    <source>
    </source>
</evidence>
<evidence type="ECO:0000303" key="14">
    <source>
    </source>
</evidence>
<evidence type="ECO:0000303" key="15">
    <source ref="2"/>
</evidence>
<evidence type="ECO:0000303" key="16">
    <source ref="3"/>
</evidence>
<evidence type="ECO:0000305" key="17"/>
<evidence type="ECO:0007744" key="18">
    <source>
        <dbReference type="PDB" id="1ZMF"/>
    </source>
</evidence>
<evidence type="ECO:0007744" key="19">
    <source>
        <dbReference type="PDB" id="2KU7"/>
    </source>
</evidence>
<evidence type="ECO:0007744" key="20">
    <source>
        <dbReference type="PDB" id="2KYX"/>
    </source>
</evidence>
<evidence type="ECO:0007744" key="21">
    <source>
        <dbReference type="PDB" id="3LPY"/>
    </source>
</evidence>
<evidence type="ECO:0007744" key="22">
    <source>
        <dbReference type="PDB" id="3MDF"/>
    </source>
</evidence>
<evidence type="ECO:0007744" key="23">
    <source>
        <dbReference type="PDB" id="5MQF"/>
    </source>
</evidence>
<evidence type="ECO:0007744" key="24">
    <source>
    </source>
</evidence>
<evidence type="ECO:0007744" key="25">
    <source>
    </source>
</evidence>
<evidence type="ECO:0007829" key="26">
    <source>
        <dbReference type="PDB" id="2R99"/>
    </source>
</evidence>
<evidence type="ECO:0007829" key="27">
    <source>
        <dbReference type="PDB" id="3MDF"/>
    </source>
</evidence>
<evidence type="ECO:0007829" key="28">
    <source>
        <dbReference type="PDB" id="3UCH"/>
    </source>
</evidence>
<evidence type="ECO:0007829" key="29">
    <source>
        <dbReference type="PDB" id="6ID1"/>
    </source>
</evidence>
<evidence type="ECO:0007829" key="30">
    <source>
        <dbReference type="PDB" id="7ZEV"/>
    </source>
</evidence>
<evidence type="ECO:0007829" key="31">
    <source>
        <dbReference type="PDB" id="7ZEW"/>
    </source>
</evidence>
<evidence type="ECO:0007829" key="32">
    <source>
        <dbReference type="PDB" id="7ZEY"/>
    </source>
</evidence>
<evidence type="ECO:0007829" key="33">
    <source>
        <dbReference type="PDB" id="7ZEZ"/>
    </source>
</evidence>
<protein>
    <recommendedName>
        <fullName>Peptidyl-prolyl cis-trans isomerase E</fullName>
        <shortName>PPIase E</shortName>
        <ecNumber evidence="6 8 9 12">5.2.1.8</ecNumber>
    </recommendedName>
    <alternativeName>
        <fullName>Cyclophilin E</fullName>
    </alternativeName>
    <alternativeName>
        <fullName evidence="13">Cyclophilin-33</fullName>
    </alternativeName>
    <alternativeName>
        <fullName>Rotamase E</fullName>
    </alternativeName>
</protein>